<keyword id="KW-0012">Acyltransferase</keyword>
<keyword id="KW-0443">Lipid metabolism</keyword>
<keyword id="KW-0472">Membrane</keyword>
<keyword id="KW-0496">Mitochondrion</keyword>
<keyword id="KW-0999">Mitochondrion inner membrane</keyword>
<keyword id="KW-1000">Mitochondrion outer membrane</keyword>
<keyword id="KW-1185">Reference proteome</keyword>
<keyword id="KW-0808">Transferase</keyword>
<protein>
    <recommendedName>
        <fullName evidence="12">Tafazzin</fullName>
        <shortName>Taz</shortName>
        <ecNumber evidence="2">2.3.1.-</ecNumber>
    </recommendedName>
</protein>
<feature type="chain" id="PRO_0000452722" description="Tafazzin">
    <location>
        <begin position="1"/>
        <end position="262"/>
    </location>
</feature>
<feature type="topological domain" description="Mitochondrial intermembrane" evidence="2">
    <location>
        <begin position="1"/>
        <end position="18"/>
    </location>
</feature>
<feature type="intramembrane region" evidence="6">
    <location>
        <begin position="19"/>
        <end position="35"/>
    </location>
</feature>
<feature type="topological domain" description="Mitochondrial intermembrane" evidence="2">
    <location>
        <begin position="36"/>
        <end position="262"/>
    </location>
</feature>
<feature type="region of interest" description="Mitochondrial targeting sequence" evidence="2">
    <location>
        <begin position="82"/>
        <end position="92"/>
    </location>
</feature>
<feature type="region of interest" description="Mitochondrial targeting sequence" evidence="2">
    <location>
        <begin position="155"/>
        <end position="190"/>
    </location>
</feature>
<feature type="short sequence motif" description="HXXXXD motif" evidence="3">
    <location>
        <begin position="69"/>
        <end position="74"/>
    </location>
</feature>
<feature type="sequence conflict" description="In Ref. 1; AAS92633." evidence="9" ref="1">
    <original>T</original>
    <variation>A</variation>
    <location>
        <position position="98"/>
    </location>
</feature>
<feature type="sequence conflict" description="In Ref. 1; AAS92633." evidence="9" ref="1">
    <original>L</original>
    <variation>I</variation>
    <location>
        <position position="258"/>
    </location>
</feature>
<accession>F1QCP6</accession>
<accession>Q6PUS0</accession>
<reference evidence="10" key="1">
    <citation type="submission" date="2004-03" db="EMBL/GenBank/DDBJ databases">
        <title>Gene Expression Profiling in the Zebrafish Kidney Marrow Tissue.</title>
        <authorList>
            <person name="Zhang G.W."/>
            <person name="Sun X.J."/>
            <person name="Wu X.Y."/>
            <person name="Song H.D."/>
            <person name="Liu T.X."/>
            <person name="Zhou Y."/>
            <person name="Sheng Y."/>
            <person name="Chen Y."/>
            <person name="Ruan Z."/>
            <person name="Jiang C.L."/>
            <person name="Fan H.Y."/>
            <person name="Zon L.I."/>
            <person name="Kanki J.P."/>
            <person name="Look A.T."/>
            <person name="Chen Z."/>
        </authorList>
    </citation>
    <scope>NUCLEOTIDE SEQUENCE [MRNA]</scope>
</reference>
<reference evidence="11" key="2">
    <citation type="journal article" date="2013" name="Nature">
        <title>The zebrafish reference genome sequence and its relationship to the human genome.</title>
        <authorList>
            <person name="Howe K."/>
            <person name="Clark M.D."/>
            <person name="Torroja C.F."/>
            <person name="Torrance J."/>
            <person name="Berthelot C."/>
            <person name="Muffato M."/>
            <person name="Collins J.E."/>
            <person name="Humphray S."/>
            <person name="McLaren K."/>
            <person name="Matthews L."/>
            <person name="McLaren S."/>
            <person name="Sealy I."/>
            <person name="Caccamo M."/>
            <person name="Churcher C."/>
            <person name="Scott C."/>
            <person name="Barrett J.C."/>
            <person name="Koch R."/>
            <person name="Rauch G.J."/>
            <person name="White S."/>
            <person name="Chow W."/>
            <person name="Kilian B."/>
            <person name="Quintais L.T."/>
            <person name="Guerra-Assuncao J.A."/>
            <person name="Zhou Y."/>
            <person name="Gu Y."/>
            <person name="Yen J."/>
            <person name="Vogel J.H."/>
            <person name="Eyre T."/>
            <person name="Redmond S."/>
            <person name="Banerjee R."/>
            <person name="Chi J."/>
            <person name="Fu B."/>
            <person name="Langley E."/>
            <person name="Maguire S.F."/>
            <person name="Laird G.K."/>
            <person name="Lloyd D."/>
            <person name="Kenyon E."/>
            <person name="Donaldson S."/>
            <person name="Sehra H."/>
            <person name="Almeida-King J."/>
            <person name="Loveland J."/>
            <person name="Trevanion S."/>
            <person name="Jones M."/>
            <person name="Quail M."/>
            <person name="Willey D."/>
            <person name="Hunt A."/>
            <person name="Burton J."/>
            <person name="Sims S."/>
            <person name="McLay K."/>
            <person name="Plumb B."/>
            <person name="Davis J."/>
            <person name="Clee C."/>
            <person name="Oliver K."/>
            <person name="Clark R."/>
            <person name="Riddle C."/>
            <person name="Elliot D."/>
            <person name="Threadgold G."/>
            <person name="Harden G."/>
            <person name="Ware D."/>
            <person name="Begum S."/>
            <person name="Mortimore B."/>
            <person name="Kerry G."/>
            <person name="Heath P."/>
            <person name="Phillimore B."/>
            <person name="Tracey A."/>
            <person name="Corby N."/>
            <person name="Dunn M."/>
            <person name="Johnson C."/>
            <person name="Wood J."/>
            <person name="Clark S."/>
            <person name="Pelan S."/>
            <person name="Griffiths G."/>
            <person name="Smith M."/>
            <person name="Glithero R."/>
            <person name="Howden P."/>
            <person name="Barker N."/>
            <person name="Lloyd C."/>
            <person name="Stevens C."/>
            <person name="Harley J."/>
            <person name="Holt K."/>
            <person name="Panagiotidis G."/>
            <person name="Lovell J."/>
            <person name="Beasley H."/>
            <person name="Henderson C."/>
            <person name="Gordon D."/>
            <person name="Auger K."/>
            <person name="Wright D."/>
            <person name="Collins J."/>
            <person name="Raisen C."/>
            <person name="Dyer L."/>
            <person name="Leung K."/>
            <person name="Robertson L."/>
            <person name="Ambridge K."/>
            <person name="Leongamornlert D."/>
            <person name="McGuire S."/>
            <person name="Gilderthorp R."/>
            <person name="Griffiths C."/>
            <person name="Manthravadi D."/>
            <person name="Nichol S."/>
            <person name="Barker G."/>
            <person name="Whitehead S."/>
            <person name="Kay M."/>
            <person name="Brown J."/>
            <person name="Murnane C."/>
            <person name="Gray E."/>
            <person name="Humphries M."/>
            <person name="Sycamore N."/>
            <person name="Barker D."/>
            <person name="Saunders D."/>
            <person name="Wallis J."/>
            <person name="Babbage A."/>
            <person name="Hammond S."/>
            <person name="Mashreghi-Mohammadi M."/>
            <person name="Barr L."/>
            <person name="Martin S."/>
            <person name="Wray P."/>
            <person name="Ellington A."/>
            <person name="Matthews N."/>
            <person name="Ellwood M."/>
            <person name="Woodmansey R."/>
            <person name="Clark G."/>
            <person name="Cooper J."/>
            <person name="Tromans A."/>
            <person name="Grafham D."/>
            <person name="Skuce C."/>
            <person name="Pandian R."/>
            <person name="Andrews R."/>
            <person name="Harrison E."/>
            <person name="Kimberley A."/>
            <person name="Garnett J."/>
            <person name="Fosker N."/>
            <person name="Hall R."/>
            <person name="Garner P."/>
            <person name="Kelly D."/>
            <person name="Bird C."/>
            <person name="Palmer S."/>
            <person name="Gehring I."/>
            <person name="Berger A."/>
            <person name="Dooley C.M."/>
            <person name="Ersan-Urun Z."/>
            <person name="Eser C."/>
            <person name="Geiger H."/>
            <person name="Geisler M."/>
            <person name="Karotki L."/>
            <person name="Kirn A."/>
            <person name="Konantz J."/>
            <person name="Konantz M."/>
            <person name="Oberlander M."/>
            <person name="Rudolph-Geiger S."/>
            <person name="Teucke M."/>
            <person name="Lanz C."/>
            <person name="Raddatz G."/>
            <person name="Osoegawa K."/>
            <person name="Zhu B."/>
            <person name="Rapp A."/>
            <person name="Widaa S."/>
            <person name="Langford C."/>
            <person name="Yang F."/>
            <person name="Schuster S.C."/>
            <person name="Carter N.P."/>
            <person name="Harrow J."/>
            <person name="Ning Z."/>
            <person name="Herrero J."/>
            <person name="Searle S.M."/>
            <person name="Enright A."/>
            <person name="Geisler R."/>
            <person name="Plasterk R.H."/>
            <person name="Lee C."/>
            <person name="Westerfield M."/>
            <person name="de Jong P.J."/>
            <person name="Zon L.I."/>
            <person name="Postlethwait J.H."/>
            <person name="Nusslein-Volhard C."/>
            <person name="Hubbard T.J."/>
            <person name="Roest Crollius H."/>
            <person name="Rogers J."/>
            <person name="Stemple D.L."/>
        </authorList>
    </citation>
    <scope>NUCLEOTIDE SEQUENCE [LARGE SCALE GENOMIC DNA]</scope>
    <source>
        <strain evidence="11">Tuebingen</strain>
    </source>
</reference>
<reference evidence="9" key="3">
    <citation type="journal article" date="2006" name="Circ. Res.">
        <title>A zebrafish model of human Barth syndrome reveals the essential role of tafazzin in cardiac development and function.</title>
        <authorList>
            <person name="Khuchua Z."/>
            <person name="Yue Z."/>
            <person name="Batts L."/>
            <person name="Strauss A.W."/>
        </authorList>
    </citation>
    <scope>TISSUE SPECIFICITY</scope>
    <scope>DEVELOPMENTAL STAGE</scope>
    <scope>DISRUPTION PHENOTYPE</scope>
</reference>
<gene>
    <name evidence="12" type="primary">tafazzin</name>
    <name type="synonym">taz</name>
</gene>
<name>TAZ_DANRE</name>
<dbReference type="EC" id="2.3.1.-" evidence="2"/>
<dbReference type="EMBL" id="AY576995">
    <property type="protein sequence ID" value="AAS92633.1"/>
    <property type="molecule type" value="mRNA"/>
</dbReference>
<dbReference type="EMBL" id="CR354596">
    <property type="status" value="NOT_ANNOTATED_CDS"/>
    <property type="molecule type" value="Genomic_DNA"/>
</dbReference>
<dbReference type="RefSeq" id="NP_001001814.1">
    <property type="nucleotide sequence ID" value="NM_001001814.1"/>
</dbReference>
<dbReference type="SMR" id="F1QCP6"/>
<dbReference type="FunCoup" id="F1QCP6">
    <property type="interactions" value="2590"/>
</dbReference>
<dbReference type="STRING" id="7955.ENSDARP00000120241"/>
<dbReference type="PaxDb" id="7955-ENSDARP00000120241"/>
<dbReference type="Ensembl" id="ENSDART00000060718">
    <property type="protein sequence ID" value="ENSDARP00000060717"/>
    <property type="gene ID" value="ENSDARG00000041421"/>
</dbReference>
<dbReference type="Ensembl" id="ENSDART00000140861">
    <property type="protein sequence ID" value="ENSDARP00000120241"/>
    <property type="gene ID" value="ENSDARG00000041421"/>
</dbReference>
<dbReference type="GeneID" id="321965"/>
<dbReference type="KEGG" id="dre:321965"/>
<dbReference type="AGR" id="ZFIN:ZDB-GENE-030131-684"/>
<dbReference type="CTD" id="6901"/>
<dbReference type="ZFIN" id="ZDB-GENE-030131-684">
    <property type="gene designation" value="tafazzin"/>
</dbReference>
<dbReference type="eggNOG" id="KOG2847">
    <property type="taxonomic scope" value="Eukaryota"/>
</dbReference>
<dbReference type="InParanoid" id="F1QCP6"/>
<dbReference type="OMA" id="TTGWFNT"/>
<dbReference type="OrthoDB" id="193467at2759"/>
<dbReference type="PhylomeDB" id="F1QCP6"/>
<dbReference type="TreeFam" id="TF313862"/>
<dbReference type="Reactome" id="R-DRE-1482798">
    <property type="pathway name" value="Acyl chain remodeling of CL"/>
</dbReference>
<dbReference type="PRO" id="PR:F1QCP6"/>
<dbReference type="Proteomes" id="UP000000437">
    <property type="component" value="Chromosome 23"/>
</dbReference>
<dbReference type="ExpressionAtlas" id="F1QCP6">
    <property type="expression patterns" value="baseline and differential"/>
</dbReference>
<dbReference type="GO" id="GO:0005743">
    <property type="term" value="C:mitochondrial inner membrane"/>
    <property type="evidence" value="ECO:0007669"/>
    <property type="project" value="UniProtKB-SubCell"/>
</dbReference>
<dbReference type="GO" id="GO:0031966">
    <property type="term" value="C:mitochondrial membrane"/>
    <property type="evidence" value="ECO:0000318"/>
    <property type="project" value="GO_Central"/>
</dbReference>
<dbReference type="GO" id="GO:0005741">
    <property type="term" value="C:mitochondrial outer membrane"/>
    <property type="evidence" value="ECO:0007669"/>
    <property type="project" value="UniProtKB-SubCell"/>
</dbReference>
<dbReference type="GO" id="GO:0005739">
    <property type="term" value="C:mitochondrion"/>
    <property type="evidence" value="ECO:0000250"/>
    <property type="project" value="UniProtKB"/>
</dbReference>
<dbReference type="GO" id="GO:0047184">
    <property type="term" value="F:1-acylglycerophosphocholine O-acyltransferase activity"/>
    <property type="evidence" value="ECO:0000318"/>
    <property type="project" value="GO_Central"/>
</dbReference>
<dbReference type="GO" id="GO:0035965">
    <property type="term" value="P:cardiolipin acyl-chain remodeling"/>
    <property type="evidence" value="ECO:0000250"/>
    <property type="project" value="UniProtKB"/>
</dbReference>
<dbReference type="GO" id="GO:0007507">
    <property type="term" value="P:heart development"/>
    <property type="evidence" value="ECO:0000315"/>
    <property type="project" value="ZFIN"/>
</dbReference>
<dbReference type="GO" id="GO:0001947">
    <property type="term" value="P:heart looping"/>
    <property type="evidence" value="ECO:0000315"/>
    <property type="project" value="ZFIN"/>
</dbReference>
<dbReference type="GO" id="GO:0007007">
    <property type="term" value="P:inner mitochondrial membrane organization"/>
    <property type="evidence" value="ECO:0000318"/>
    <property type="project" value="GO_Central"/>
</dbReference>
<dbReference type="GO" id="GO:0045823">
    <property type="term" value="P:positive regulation of heart contraction"/>
    <property type="evidence" value="ECO:0000315"/>
    <property type="project" value="ZFIN"/>
</dbReference>
<dbReference type="CDD" id="cd07989">
    <property type="entry name" value="LPLAT_AGPAT-like"/>
    <property type="match status" value="1"/>
</dbReference>
<dbReference type="InterPro" id="IPR002123">
    <property type="entry name" value="Plipid/glycerol_acylTrfase"/>
</dbReference>
<dbReference type="InterPro" id="IPR000872">
    <property type="entry name" value="Tafazzin"/>
</dbReference>
<dbReference type="PANTHER" id="PTHR12497:SF0">
    <property type="entry name" value="TAFAZZIN"/>
    <property type="match status" value="1"/>
</dbReference>
<dbReference type="PANTHER" id="PTHR12497">
    <property type="entry name" value="TAZ PROTEIN TAFAZZIN"/>
    <property type="match status" value="1"/>
</dbReference>
<dbReference type="Pfam" id="PF01553">
    <property type="entry name" value="Acyltransferase"/>
    <property type="match status" value="1"/>
</dbReference>
<dbReference type="PRINTS" id="PR00979">
    <property type="entry name" value="TAFAZZIN"/>
</dbReference>
<dbReference type="SMART" id="SM00563">
    <property type="entry name" value="PlsC"/>
    <property type="match status" value="1"/>
</dbReference>
<dbReference type="SUPFAM" id="SSF69593">
    <property type="entry name" value="Glycerol-3-phosphate (1)-acyltransferase"/>
    <property type="match status" value="1"/>
</dbReference>
<evidence type="ECO:0000250" key="1">
    <source>
        <dbReference type="UniProtKB" id="Q06510"/>
    </source>
</evidence>
<evidence type="ECO:0000250" key="2">
    <source>
        <dbReference type="UniProtKB" id="Q16635"/>
    </source>
</evidence>
<evidence type="ECO:0000250" key="3">
    <source>
        <dbReference type="UniProtKB" id="Q3TFD2"/>
    </source>
</evidence>
<evidence type="ECO:0000250" key="4">
    <source>
        <dbReference type="UniProtKB" id="Q91WF0"/>
    </source>
</evidence>
<evidence type="ECO:0000250" key="5">
    <source>
        <dbReference type="UniProtKB" id="Q9V6G5"/>
    </source>
</evidence>
<evidence type="ECO:0000255" key="6"/>
<evidence type="ECO:0000255" key="7">
    <source>
        <dbReference type="RuleBase" id="RU365062"/>
    </source>
</evidence>
<evidence type="ECO:0000269" key="8">
    <source>
    </source>
</evidence>
<evidence type="ECO:0000305" key="9"/>
<evidence type="ECO:0000312" key="10">
    <source>
        <dbReference type="EMBL" id="AAS92633.1"/>
    </source>
</evidence>
<evidence type="ECO:0000312" key="11">
    <source>
        <dbReference type="Proteomes" id="UP000000437"/>
    </source>
</evidence>
<evidence type="ECO:0000312" key="12">
    <source>
        <dbReference type="ZFIN" id="ZDB-GENE-030131-684"/>
    </source>
</evidence>
<proteinExistence type="evidence at transcript level"/>
<comment type="function">
    <text evidence="1 2 4 5">Acyltransferase required to remodel newly synthesized phospholipid cardiolipin (1',3'-bis-[1,2-diacyl-sn-glycero-3-phospho]-glycerol or CL), a key component of the mitochondrial inner membrane, with tissue specific acyl chains necessary for adequate mitochondrial function (By similarity). Its role in cellular physiology is to improve mitochondrial performance (By similarity). CL is critical for the coassembly of lipids and proteins in mitochondrial membranes, for instance, remodeling of the acyl groups of CL in the mitochondrial inner membrane affects the assembly and stability of respiratory chain complex IV and its supercomplex forms (By similarity). Catalyzes the transacylation between phospholipids and lysophospholipids, with the highest rate being between phosphatidylcholine (1,2-diacyl-sn-glycero-3-phosphocholine or PC) and CL. Catalyzes both 1-acyl-sn-glycero-3-phosphocholine (lysophosphatidylcholine or LPC) reacylation and PC-CL transacylation, that means, it exchanges acyl groups between CL and PC by a combination of forward and reverse transacylations. Also catalyzes transacylations between other phospholipids such as phosphatidylethanolamine (1,2-diacyl-sn-glycero-3-phosphoethanolamine or PE) and CL, between PC and PE, and between PC and phosphatidate (1,2-diacyl-sn-glycero-3-phosphate or PA), although at lower rate. Not regiospecific, it transfers acyl groups into any of the sn-1 and sn-2 positions of the monolysocardiolipin (MLCL), which is an important prerequisite for uniformity and symmetry in CL acyl distribution. Cannot transacylate dilysocardiolipin (DLCL), thus, the role of MLCL is limited to that of an acyl acceptor. CoA-independent, it can reshuffle molecular species within a single phospholipid class. Redistributes fatty acids between MLCL, CL, and other lipids, which prolongs the half-life of CL. Its action is completely reversible, which allows for cyclic changes, such as fission and fusion or bending and flattening of the membrane. Hence, by contributing to the flexibility of the lipid composition, it plays an important role in the dynamics of mitochondria membranes. Essential for the final stage of spermatogenesis, spermatid individualization (By similarity). Required for the initiation of mitophagy (By similarity). Required to ensure progression of spermatocytes through meiosis (By similarity).</text>
</comment>
<comment type="catalytic activity">
    <reaction evidence="2">
        <text>a 1-acyl-sn-glycero-3-phosphate + a 1,2-diacyl-sn-glycero-3-phospho-(1'-sn-glycerol) = 1-acyl-sn-glycero-3-phospho-(1'-sn-glycerol) + a 1,2-diacyl-sn-glycero-3-phosphate</text>
        <dbReference type="Rhea" id="RHEA:67748"/>
        <dbReference type="ChEBI" id="CHEBI:57970"/>
        <dbReference type="ChEBI" id="CHEBI:58608"/>
        <dbReference type="ChEBI" id="CHEBI:64716"/>
        <dbReference type="ChEBI" id="CHEBI:64840"/>
    </reaction>
    <physiologicalReaction direction="left-to-right" evidence="2">
        <dbReference type="Rhea" id="RHEA:67749"/>
    </physiologicalReaction>
    <physiologicalReaction direction="right-to-left" evidence="2">
        <dbReference type="Rhea" id="RHEA:67750"/>
    </physiologicalReaction>
</comment>
<comment type="catalytic activity">
    <reaction evidence="2">
        <text>1-hexadecanoyl-2-(9Z,12Z-octadecadienoyl)-sn-glycero-3-phospho-(1'-sn-glycerol) + 1-(9Z-octadecenoyl)-sn-glycero-3-phosphate = 1-(9Z)-octadecenoyl-2-(9Z,12Z)-octadecadienoyl-sn-glycero-3-phosphate + 1-hexadecanoyl-sn-glycero-3-phospho-(1'-sn-glycerol)</text>
        <dbReference type="Rhea" id="RHEA:67752"/>
        <dbReference type="ChEBI" id="CHEBI:72840"/>
        <dbReference type="ChEBI" id="CHEBI:74544"/>
        <dbReference type="ChEBI" id="CHEBI:74563"/>
        <dbReference type="ChEBI" id="CHEBI:75158"/>
    </reaction>
    <physiologicalReaction direction="left-to-right" evidence="2">
        <dbReference type="Rhea" id="RHEA:67753"/>
    </physiologicalReaction>
    <physiologicalReaction direction="right-to-left" evidence="2">
        <dbReference type="Rhea" id="RHEA:67754"/>
    </physiologicalReaction>
</comment>
<comment type="catalytic activity">
    <reaction evidence="2">
        <text>1'-[1,2-diacyl-sn-glycero-3-phospho],3'-[1-acyl-sn-glycero-3-phospho]-glycerol + a 1,2-diacyl-sn-glycero-3-phosphocholine = a cardiolipin + a 1-acyl-sn-glycero-3-phosphocholine</text>
        <dbReference type="Rhea" id="RHEA:33731"/>
        <dbReference type="ChEBI" id="CHEBI:57643"/>
        <dbReference type="ChEBI" id="CHEBI:58168"/>
        <dbReference type="ChEBI" id="CHEBI:62237"/>
        <dbReference type="ChEBI" id="CHEBI:64743"/>
    </reaction>
    <physiologicalReaction direction="left-to-right" evidence="2">
        <dbReference type="Rhea" id="RHEA:33732"/>
    </physiologicalReaction>
    <physiologicalReaction direction="right-to-left" evidence="2">
        <dbReference type="Rhea" id="RHEA:33733"/>
    </physiologicalReaction>
</comment>
<comment type="catalytic activity">
    <reaction evidence="2">
        <text>1-hexadecanoyl-2-(9Z,12Z-octadecadienoyl)-sn-glycero-3-phosphocholine + 1-hexadecanoyl-sn-glycero-3-phosphocholine = 2-(9Z,12Z-octadecadienoyl)-sn-glycero-3-phosphocholine + 1,2-dihexadecanoyl-sn-glycero-3-phosphocholine</text>
        <dbReference type="Rhea" id="RHEA:68988"/>
        <dbReference type="ChEBI" id="CHEBI:72998"/>
        <dbReference type="ChEBI" id="CHEBI:72999"/>
        <dbReference type="ChEBI" id="CHEBI:73002"/>
        <dbReference type="ChEBI" id="CHEBI:76084"/>
    </reaction>
    <physiologicalReaction direction="left-to-right" evidence="2">
        <dbReference type="Rhea" id="RHEA:68989"/>
    </physiologicalReaction>
    <physiologicalReaction direction="right-to-left" evidence="2">
        <dbReference type="Rhea" id="RHEA:68990"/>
    </physiologicalReaction>
</comment>
<comment type="catalytic activity">
    <reaction evidence="2">
        <text>1,2-di-(9Z-octadecenoyl)-sn-glycero-3-phosphocholine + 1-hexadecanoyl-sn-glycero-3-phosphocholine = 1-hexadecanoyl-2-(9Z-octadecenoyl)-sn-glycero-3-phosphocholine + 1-(9Z-octadecenoyl)-sn-glycero-3-phosphocholine</text>
        <dbReference type="Rhea" id="RHEA:43816"/>
        <dbReference type="ChEBI" id="CHEBI:28610"/>
        <dbReference type="ChEBI" id="CHEBI:72998"/>
        <dbReference type="ChEBI" id="CHEBI:73001"/>
        <dbReference type="ChEBI" id="CHEBI:74669"/>
    </reaction>
    <physiologicalReaction direction="left-to-right" evidence="2">
        <dbReference type="Rhea" id="RHEA:43817"/>
    </physiologicalReaction>
    <physiologicalReaction direction="right-to-left" evidence="2">
        <dbReference type="Rhea" id="RHEA:43818"/>
    </physiologicalReaction>
</comment>
<comment type="pathway">
    <text evidence="2">Phospholipid metabolism.</text>
</comment>
<comment type="subcellular location">
    <subcellularLocation>
        <location evidence="2">Mitochondrion outer membrane</location>
        <topology evidence="2">Peripheral membrane protein</topology>
        <orientation evidence="2">Intermembrane side</orientation>
    </subcellularLocation>
    <subcellularLocation>
        <location evidence="2">Mitochondrion inner membrane</location>
        <topology evidence="2">Peripheral membrane protein</topology>
        <orientation evidence="2">Intermembrane side</orientation>
    </subcellularLocation>
</comment>
<comment type="tissue specificity">
    <text evidence="8">At 10 hours post-fertilization (hpf), expressed ubiquitously, including in cardiac progenitor regions, with strongest expression in the head area. By 24 hpf, highly expressed in the head, eyes, and tail. By 30 hpf, expression is restricted to the head, heart, eyes, and the region next to the yolk corresponding to endodermal tissue. At 51 hpf, expression is restricted to the heart.</text>
</comment>
<comment type="developmental stage">
    <text evidence="8">Before gastrulation, expression is barely detectable. At 7 hours post-fertilization (hpf), sharply up-regulated. High-level expression continues throughout the segmentation (12 hpf) and pharyngula (24 to 30 hpf) stages. At hatching at 51 hpf, expression declines dramatically.</text>
</comment>
<comment type="domain">
    <text evidence="3">The HXXXXD motif is essential for acyltransferase activity.</text>
</comment>
<comment type="disruption phenotype">
    <text evidence="8">Morpholino knockdown results in dose-dependent lethality, severe developmental and growth retardation, marked bradycardia and pericardial effusions, and generalized edema.</text>
</comment>
<comment type="miscellaneous">
    <text evidence="2">The enzyme was named after a masochistic character Tafazzi, once popular on Italian television, apparently due to the difficulty encountered for its identification and characterization.</text>
</comment>
<comment type="similarity">
    <text evidence="7">Belongs to the taffazin family.</text>
</comment>
<sequence length="262" mass="30574">MPLEVTWPFPQCPRLGWRISSRVVMGMVGSYSYLWTKYFNSLMVHNQDVLLNLVDERPQDTPLITVCNHQSCMDDPHIWGVLKFRQLWNLNKMRWTPTASDICFTREFHSSFFSRGKCVPVVRGDGVYQKGMDFLLERLNQGEWIHIFPEGRVNMSGEFMRIKWGIGRLIAECSLHPIILPMWHIGMNDVLPNETPYIPRVGQRITVLVGKPFTVRHLVNALRAENTNPTEMRKTVTDYIQDEFRSLKAQAEALHHRLQNHT</sequence>
<organism evidence="11">
    <name type="scientific">Danio rerio</name>
    <name type="common">Zebrafish</name>
    <name type="synonym">Brachydanio rerio</name>
    <dbReference type="NCBI Taxonomy" id="7955"/>
    <lineage>
        <taxon>Eukaryota</taxon>
        <taxon>Metazoa</taxon>
        <taxon>Chordata</taxon>
        <taxon>Craniata</taxon>
        <taxon>Vertebrata</taxon>
        <taxon>Euteleostomi</taxon>
        <taxon>Actinopterygii</taxon>
        <taxon>Neopterygii</taxon>
        <taxon>Teleostei</taxon>
        <taxon>Ostariophysi</taxon>
        <taxon>Cypriniformes</taxon>
        <taxon>Danionidae</taxon>
        <taxon>Danioninae</taxon>
        <taxon>Danio</taxon>
    </lineage>
</organism>